<name>RPOB_MYCPR</name>
<gene>
    <name type="primary">rpoB</name>
</gene>
<evidence type="ECO:0000250" key="1"/>
<evidence type="ECO:0000256" key="2">
    <source>
        <dbReference type="SAM" id="MobiDB-lite"/>
    </source>
</evidence>
<evidence type="ECO:0000305" key="3"/>
<dbReference type="EC" id="2.7.7.6"/>
<dbReference type="EMBL" id="AF057481">
    <property type="protein sequence ID" value="AAD55545.1"/>
    <property type="molecule type" value="Genomic_DNA"/>
</dbReference>
<dbReference type="SMR" id="Q9RQZ7"/>
<dbReference type="STRING" id="43304.GCA_001403655_00494"/>
<dbReference type="GO" id="GO:0000428">
    <property type="term" value="C:DNA-directed RNA polymerase complex"/>
    <property type="evidence" value="ECO:0007669"/>
    <property type="project" value="UniProtKB-KW"/>
</dbReference>
<dbReference type="GO" id="GO:0003677">
    <property type="term" value="F:DNA binding"/>
    <property type="evidence" value="ECO:0007669"/>
    <property type="project" value="InterPro"/>
</dbReference>
<dbReference type="GO" id="GO:0003899">
    <property type="term" value="F:DNA-directed RNA polymerase activity"/>
    <property type="evidence" value="ECO:0007669"/>
    <property type="project" value="UniProtKB-EC"/>
</dbReference>
<dbReference type="GO" id="GO:0006351">
    <property type="term" value="P:DNA-templated transcription"/>
    <property type="evidence" value="ECO:0007669"/>
    <property type="project" value="InterPro"/>
</dbReference>
<dbReference type="Gene3D" id="3.90.1100.10">
    <property type="match status" value="1"/>
</dbReference>
<dbReference type="InterPro" id="IPR007645">
    <property type="entry name" value="RNA_pol_Rpb2_3"/>
</dbReference>
<dbReference type="Pfam" id="PF04565">
    <property type="entry name" value="RNA_pol_Rpb2_3"/>
    <property type="match status" value="1"/>
</dbReference>
<dbReference type="SUPFAM" id="SSF64484">
    <property type="entry name" value="beta and beta-prime subunits of DNA dependent RNA-polymerase"/>
    <property type="match status" value="1"/>
</dbReference>
<protein>
    <recommendedName>
        <fullName>DNA-directed RNA polymerase subunit beta</fullName>
        <shortName>RNAP subunit beta</shortName>
        <ecNumber>2.7.7.6</ecNumber>
    </recommendedName>
    <alternativeName>
        <fullName>RNA polymerase subunit beta</fullName>
    </alternativeName>
    <alternativeName>
        <fullName>Transcriptase subunit beta</fullName>
    </alternativeName>
</protein>
<comment type="function">
    <text evidence="1">DNA-dependent RNA polymerase catalyzes the transcription of DNA into RNA using the four ribonucleoside triphosphates as substrates.</text>
</comment>
<comment type="catalytic activity">
    <reaction>
        <text>RNA(n) + a ribonucleoside 5'-triphosphate = RNA(n+1) + diphosphate</text>
        <dbReference type="Rhea" id="RHEA:21248"/>
        <dbReference type="Rhea" id="RHEA-COMP:14527"/>
        <dbReference type="Rhea" id="RHEA-COMP:17342"/>
        <dbReference type="ChEBI" id="CHEBI:33019"/>
        <dbReference type="ChEBI" id="CHEBI:61557"/>
        <dbReference type="ChEBI" id="CHEBI:140395"/>
        <dbReference type="EC" id="2.7.7.6"/>
    </reaction>
</comment>
<comment type="subunit">
    <text evidence="1">The RNAP catalytic core consists of 2 alpha, 1 beta, 1 beta' and 1 omega subunit. When a sigma factor is associated with the core the holoenzyme is formed, which can initiate transcription (By similarity).</text>
</comment>
<comment type="similarity">
    <text evidence="3">Belongs to the RNA polymerase beta chain family.</text>
</comment>
<organism>
    <name type="scientific">Mycolicibacterium peregrinum</name>
    <name type="common">Mycobacterium peregrinum</name>
    <dbReference type="NCBI Taxonomy" id="43304"/>
    <lineage>
        <taxon>Bacteria</taxon>
        <taxon>Bacillati</taxon>
        <taxon>Actinomycetota</taxon>
        <taxon>Actinomycetes</taxon>
        <taxon>Mycobacteriales</taxon>
        <taxon>Mycobacteriaceae</taxon>
        <taxon>Mycolicibacterium</taxon>
    </lineage>
</organism>
<sequence>RTVGELIQNQIRVGLSRMERVVRERMTTQDVEAITPQTLINIRPVVAAIKEFFGTSQLSQFMDQNNPLSGLTHKRRLSALGPGGLSRERAGLEVRDVHSSH</sequence>
<keyword id="KW-0240">DNA-directed RNA polymerase</keyword>
<keyword id="KW-0548">Nucleotidyltransferase</keyword>
<keyword id="KW-0804">Transcription</keyword>
<keyword id="KW-0808">Transferase</keyword>
<accession>Q9RQZ7</accession>
<reference key="1">
    <citation type="journal article" date="1999" name="J. Clin. Microbiol.">
        <title>Identification of mycobacterial species by comparative sequence analysis of the RNA polymerase gene (rpoB).</title>
        <authorList>
            <person name="Kim B.J."/>
            <person name="Lee S.H."/>
            <person name="Lyu M.A."/>
            <person name="Kim S.J."/>
            <person name="Bai G.H."/>
            <person name="Chae G.T."/>
            <person name="Kim E.C."/>
            <person name="Cha C.Y."/>
            <person name="Kook Y.H."/>
        </authorList>
    </citation>
    <scope>NUCLEOTIDE SEQUENCE [GENOMIC DNA]</scope>
    <source>
        <strain>ATCC 14467 / DSM 43271 / JCM 12142 / NCTC 10264 / TMC 1547</strain>
    </source>
</reference>
<feature type="chain" id="PRO_0000047923" description="DNA-directed RNA polymerase subunit beta">
    <location>
        <begin position="1" status="less than"/>
        <end position="101" status="greater than"/>
    </location>
</feature>
<feature type="region of interest" description="Disordered" evidence="2">
    <location>
        <begin position="74"/>
        <end position="101"/>
    </location>
</feature>
<feature type="compositionally biased region" description="Basic and acidic residues" evidence="2">
    <location>
        <begin position="86"/>
        <end position="101"/>
    </location>
</feature>
<feature type="non-terminal residue">
    <location>
        <position position="1"/>
    </location>
</feature>
<feature type="non-terminal residue">
    <location>
        <position position="101"/>
    </location>
</feature>
<proteinExistence type="inferred from homology"/>